<gene>
    <name evidence="1" type="primary">lptD</name>
    <name type="synonym">imp</name>
    <name type="synonym">ostA</name>
    <name type="ordered locus">lpg0297</name>
</gene>
<protein>
    <recommendedName>
        <fullName evidence="1">LPS-assembly protein LptD</fullName>
    </recommendedName>
</protein>
<reference key="1">
    <citation type="journal article" date="2004" name="Science">
        <title>The genomic sequence of the accidental pathogen Legionella pneumophila.</title>
        <authorList>
            <person name="Chien M."/>
            <person name="Morozova I."/>
            <person name="Shi S."/>
            <person name="Sheng H."/>
            <person name="Chen J."/>
            <person name="Gomez S.M."/>
            <person name="Asamani G."/>
            <person name="Hill K."/>
            <person name="Nuara J."/>
            <person name="Feder M."/>
            <person name="Rineer J."/>
            <person name="Greenberg J.J."/>
            <person name="Steshenko V."/>
            <person name="Park S.H."/>
            <person name="Zhao B."/>
            <person name="Teplitskaya E."/>
            <person name="Edwards J.R."/>
            <person name="Pampou S."/>
            <person name="Georghiou A."/>
            <person name="Chou I.-C."/>
            <person name="Iannuccilli W."/>
            <person name="Ulz M.E."/>
            <person name="Kim D.H."/>
            <person name="Geringer-Sameth A."/>
            <person name="Goldsberry C."/>
            <person name="Morozov P."/>
            <person name="Fischer S.G."/>
            <person name="Segal G."/>
            <person name="Qu X."/>
            <person name="Rzhetsky A."/>
            <person name="Zhang P."/>
            <person name="Cayanis E."/>
            <person name="De Jong P.J."/>
            <person name="Ju J."/>
            <person name="Kalachikov S."/>
            <person name="Shuman H.A."/>
            <person name="Russo J.J."/>
        </authorList>
    </citation>
    <scope>NUCLEOTIDE SEQUENCE [LARGE SCALE GENOMIC DNA]</scope>
    <source>
        <strain>Philadelphia 1 / ATCC 33152 / DSM 7513</strain>
    </source>
</reference>
<keyword id="KW-0998">Cell outer membrane</keyword>
<keyword id="KW-0472">Membrane</keyword>
<keyword id="KW-1185">Reference proteome</keyword>
<keyword id="KW-0732">Signal</keyword>
<proteinExistence type="inferred from homology"/>
<evidence type="ECO:0000255" key="1">
    <source>
        <dbReference type="HAMAP-Rule" id="MF_01411"/>
    </source>
</evidence>
<evidence type="ECO:0000305" key="2"/>
<feature type="signal peptide" evidence="1">
    <location>
        <begin position="1"/>
        <end position="21"/>
    </location>
</feature>
<feature type="chain" id="PRO_0000281615" description="LPS-assembly protein LptD">
    <location>
        <begin position="22"/>
        <end position="839"/>
    </location>
</feature>
<sequence>MAIGITACVLSLINYQGLAYSAALINEPIQACVIAREVDLTDDIRTKFAQCLGWQADQSSPVCLGFYKPIAVTPLASPDEVRILADTASFYRTQRSTLSGHVEMQQGQRVVNAQTAYVYRDPKTNEVTKIEFLNHVRYLEPDRMMIARKAVVYPQDKSGEVEDVLYRFNTNRSNALLPAWGRASLIKRFANQDYFLKEATYTTCAPQDKAWAIEAESISIDNEKGKGIARNAKLRIHEWPVLYTPYLSFPTNRDRKSGFLMPIVGYSNVGGADLGIPYYWNMAPNYDMTLVPHLYTKRGLMLGGQFRYLTSKSTGTFNGNFLPKDKAFGRFLQDNEVEFPQIRGLSTNRWEVNFVDSTQFLSDLQLNVNFQQVSDDYYLQDFSTNLASVTQRQLLRQADLTYTTENWTFRGMGQSYQTLHPINEIPVSPVYERLPQLMARGYYDDLPFNAQFNILGQYDQFHWPNDSWNIALNNMPQGPRFHLNPILSVPMMKPWGYVTPSVQFVENYYDISRNYTWGTSRANYNLTIPRYSLDGGLYFERDLHLKGTYYIQTLEPRLFYLRVPYYNQTLIPVYDSGFMIFNVDQLFRTNRFSGFDRIGDANQLSYALTTRWLEDESGAEKANFSIGQIKYFSERRVQLCQSPTGFCTDNPDTFGNLSSTFGTSPVASRAVYKFNPAWGITGDYIWDPATRATNNADLNLHYQPARNAIINGGYSYLVNGDVTQVRNNDTENNALHQAILSAAWPLSEKWSGIGAYSYNISKNYSMMSFLGVQYDSCCWAMRILGGRIFRSLNEEFEPQYNNNIYLQILLKGLGSVASSDPSGILNTYIPGYYDPFRRR</sequence>
<comment type="function">
    <text evidence="1">Together with LptE, is involved in the assembly of lipopolysaccharide (LPS) at the surface of the outer membrane.</text>
</comment>
<comment type="subunit">
    <text evidence="1">Component of the lipopolysaccharide transport and assembly complex. Interacts with LptE and LptA.</text>
</comment>
<comment type="subcellular location">
    <subcellularLocation>
        <location evidence="1">Cell outer membrane</location>
    </subcellularLocation>
</comment>
<comment type="similarity">
    <text evidence="1">Belongs to the LptD family.</text>
</comment>
<comment type="sequence caution" evidence="2">
    <conflict type="erroneous initiation">
        <sequence resource="EMBL-CDS" id="AAU26404"/>
    </conflict>
</comment>
<name>LPTD_LEGPH</name>
<dbReference type="EMBL" id="AE017354">
    <property type="protein sequence ID" value="AAU26404.1"/>
    <property type="status" value="ALT_INIT"/>
    <property type="molecule type" value="Genomic_DNA"/>
</dbReference>
<dbReference type="RefSeq" id="WP_016356722.1">
    <property type="nucleotide sequence ID" value="NC_002942.5"/>
</dbReference>
<dbReference type="RefSeq" id="YP_094351.1">
    <property type="nucleotide sequence ID" value="NC_002942.5"/>
</dbReference>
<dbReference type="SMR" id="Q5ZYR4"/>
<dbReference type="STRING" id="272624.lpg0297"/>
<dbReference type="PaxDb" id="272624-lpg0297"/>
<dbReference type="KEGG" id="lpn:lpg0297"/>
<dbReference type="PATRIC" id="fig|272624.6.peg.317"/>
<dbReference type="eggNOG" id="COG1452">
    <property type="taxonomic scope" value="Bacteria"/>
</dbReference>
<dbReference type="HOGENOM" id="CLU_009039_0_0_6"/>
<dbReference type="OrthoDB" id="9760225at2"/>
<dbReference type="Proteomes" id="UP000000609">
    <property type="component" value="Chromosome"/>
</dbReference>
<dbReference type="GO" id="GO:0009279">
    <property type="term" value="C:cell outer membrane"/>
    <property type="evidence" value="ECO:0007669"/>
    <property type="project" value="UniProtKB-SubCell"/>
</dbReference>
<dbReference type="GO" id="GO:1990351">
    <property type="term" value="C:transporter complex"/>
    <property type="evidence" value="ECO:0007669"/>
    <property type="project" value="TreeGrafter"/>
</dbReference>
<dbReference type="GO" id="GO:0043165">
    <property type="term" value="P:Gram-negative-bacterium-type cell outer membrane assembly"/>
    <property type="evidence" value="ECO:0007669"/>
    <property type="project" value="UniProtKB-UniRule"/>
</dbReference>
<dbReference type="GO" id="GO:0015920">
    <property type="term" value="P:lipopolysaccharide transport"/>
    <property type="evidence" value="ECO:0007669"/>
    <property type="project" value="InterPro"/>
</dbReference>
<dbReference type="HAMAP" id="MF_01411">
    <property type="entry name" value="LPS_assembly_LptD"/>
    <property type="match status" value="1"/>
</dbReference>
<dbReference type="InterPro" id="IPR020889">
    <property type="entry name" value="LipoPS_assembly_LptD"/>
</dbReference>
<dbReference type="InterPro" id="IPR050218">
    <property type="entry name" value="LptD"/>
</dbReference>
<dbReference type="InterPro" id="IPR007543">
    <property type="entry name" value="LptD_C"/>
</dbReference>
<dbReference type="InterPro" id="IPR005653">
    <property type="entry name" value="OstA-like_N"/>
</dbReference>
<dbReference type="PANTHER" id="PTHR30189">
    <property type="entry name" value="LPS-ASSEMBLY PROTEIN"/>
    <property type="match status" value="1"/>
</dbReference>
<dbReference type="PANTHER" id="PTHR30189:SF1">
    <property type="entry name" value="LPS-ASSEMBLY PROTEIN LPTD"/>
    <property type="match status" value="1"/>
</dbReference>
<dbReference type="Pfam" id="PF04453">
    <property type="entry name" value="LptD"/>
    <property type="match status" value="1"/>
</dbReference>
<dbReference type="Pfam" id="PF03968">
    <property type="entry name" value="LptD_N"/>
    <property type="match status" value="1"/>
</dbReference>
<accession>Q5ZYR4</accession>
<organism>
    <name type="scientific">Legionella pneumophila subsp. pneumophila (strain Philadelphia 1 / ATCC 33152 / DSM 7513)</name>
    <dbReference type="NCBI Taxonomy" id="272624"/>
    <lineage>
        <taxon>Bacteria</taxon>
        <taxon>Pseudomonadati</taxon>
        <taxon>Pseudomonadota</taxon>
        <taxon>Gammaproteobacteria</taxon>
        <taxon>Legionellales</taxon>
        <taxon>Legionellaceae</taxon>
        <taxon>Legionella</taxon>
    </lineage>
</organism>